<gene>
    <name evidence="1" type="primary">proS</name>
    <name type="ordered locus">CTN_0157</name>
</gene>
<organism>
    <name type="scientific">Thermotoga neapolitana (strain ATCC 49049 / DSM 4359 / NBRC 107923 / NS-E)</name>
    <dbReference type="NCBI Taxonomy" id="309803"/>
    <lineage>
        <taxon>Bacteria</taxon>
        <taxon>Thermotogati</taxon>
        <taxon>Thermotogota</taxon>
        <taxon>Thermotogae</taxon>
        <taxon>Thermotogales</taxon>
        <taxon>Thermotogaceae</taxon>
        <taxon>Thermotoga</taxon>
    </lineage>
</organism>
<name>SYP_THENN</name>
<evidence type="ECO:0000255" key="1">
    <source>
        <dbReference type="HAMAP-Rule" id="MF_01569"/>
    </source>
</evidence>
<proteinExistence type="inferred from homology"/>
<dbReference type="EC" id="6.1.1.15" evidence="1"/>
<dbReference type="EMBL" id="CP000916">
    <property type="protein sequence ID" value="ACM22333.1"/>
    <property type="molecule type" value="Genomic_DNA"/>
</dbReference>
<dbReference type="RefSeq" id="WP_012645043.1">
    <property type="nucleotide sequence ID" value="NC_011978.1"/>
</dbReference>
<dbReference type="SMR" id="B9KBD7"/>
<dbReference type="STRING" id="309803.CTN_0157"/>
<dbReference type="KEGG" id="tna:CTN_0157"/>
<dbReference type="eggNOG" id="COG0442">
    <property type="taxonomic scope" value="Bacteria"/>
</dbReference>
<dbReference type="HOGENOM" id="CLU_016739_0_0_0"/>
<dbReference type="Proteomes" id="UP000000445">
    <property type="component" value="Chromosome"/>
</dbReference>
<dbReference type="GO" id="GO:0005829">
    <property type="term" value="C:cytosol"/>
    <property type="evidence" value="ECO:0007669"/>
    <property type="project" value="TreeGrafter"/>
</dbReference>
<dbReference type="GO" id="GO:0002161">
    <property type="term" value="F:aminoacyl-tRNA deacylase activity"/>
    <property type="evidence" value="ECO:0007669"/>
    <property type="project" value="InterPro"/>
</dbReference>
<dbReference type="GO" id="GO:0005524">
    <property type="term" value="F:ATP binding"/>
    <property type="evidence" value="ECO:0007669"/>
    <property type="project" value="UniProtKB-UniRule"/>
</dbReference>
<dbReference type="GO" id="GO:0004827">
    <property type="term" value="F:proline-tRNA ligase activity"/>
    <property type="evidence" value="ECO:0007669"/>
    <property type="project" value="UniProtKB-UniRule"/>
</dbReference>
<dbReference type="GO" id="GO:0006433">
    <property type="term" value="P:prolyl-tRNA aminoacylation"/>
    <property type="evidence" value="ECO:0007669"/>
    <property type="project" value="UniProtKB-UniRule"/>
</dbReference>
<dbReference type="CDD" id="cd04334">
    <property type="entry name" value="ProRS-INS"/>
    <property type="match status" value="1"/>
</dbReference>
<dbReference type="CDD" id="cd00861">
    <property type="entry name" value="ProRS_anticodon_short"/>
    <property type="match status" value="1"/>
</dbReference>
<dbReference type="CDD" id="cd00779">
    <property type="entry name" value="ProRS_core_prok"/>
    <property type="match status" value="1"/>
</dbReference>
<dbReference type="FunFam" id="3.30.930.10:FF:000088">
    <property type="entry name" value="Proline--tRNA ligase"/>
    <property type="match status" value="1"/>
</dbReference>
<dbReference type="FunFam" id="3.30.930.10:FF:000167">
    <property type="entry name" value="Proline--tRNA ligase"/>
    <property type="match status" value="1"/>
</dbReference>
<dbReference type="Gene3D" id="3.40.50.800">
    <property type="entry name" value="Anticodon-binding domain"/>
    <property type="match status" value="1"/>
</dbReference>
<dbReference type="Gene3D" id="3.30.930.10">
    <property type="entry name" value="Bira Bifunctional Protein, Domain 2"/>
    <property type="match status" value="2"/>
</dbReference>
<dbReference type="Gene3D" id="3.90.960.10">
    <property type="entry name" value="YbaK/aminoacyl-tRNA synthetase-associated domain"/>
    <property type="match status" value="1"/>
</dbReference>
<dbReference type="HAMAP" id="MF_01569">
    <property type="entry name" value="Pro_tRNA_synth_type1"/>
    <property type="match status" value="1"/>
</dbReference>
<dbReference type="InterPro" id="IPR002314">
    <property type="entry name" value="aa-tRNA-synt_IIb"/>
</dbReference>
<dbReference type="InterPro" id="IPR006195">
    <property type="entry name" value="aa-tRNA-synth_II"/>
</dbReference>
<dbReference type="InterPro" id="IPR045864">
    <property type="entry name" value="aa-tRNA-synth_II/BPL/LPL"/>
</dbReference>
<dbReference type="InterPro" id="IPR004154">
    <property type="entry name" value="Anticodon-bd"/>
</dbReference>
<dbReference type="InterPro" id="IPR036621">
    <property type="entry name" value="Anticodon-bd_dom_sf"/>
</dbReference>
<dbReference type="InterPro" id="IPR002316">
    <property type="entry name" value="Pro-tRNA-ligase_IIa"/>
</dbReference>
<dbReference type="InterPro" id="IPR004500">
    <property type="entry name" value="Pro-tRNA-synth_IIa_bac-type"/>
</dbReference>
<dbReference type="InterPro" id="IPR023717">
    <property type="entry name" value="Pro-tRNA-Synthase_IIa_type1"/>
</dbReference>
<dbReference type="InterPro" id="IPR050062">
    <property type="entry name" value="Pro-tRNA_synthetase"/>
</dbReference>
<dbReference type="InterPro" id="IPR044140">
    <property type="entry name" value="ProRS_anticodon_short"/>
</dbReference>
<dbReference type="InterPro" id="IPR033730">
    <property type="entry name" value="ProRS_core_prok"/>
</dbReference>
<dbReference type="InterPro" id="IPR036754">
    <property type="entry name" value="YbaK/aa-tRNA-synt-asso_dom_sf"/>
</dbReference>
<dbReference type="InterPro" id="IPR007214">
    <property type="entry name" value="YbaK/aa-tRNA-synth-assoc-dom"/>
</dbReference>
<dbReference type="NCBIfam" id="NF006625">
    <property type="entry name" value="PRK09194.1"/>
    <property type="match status" value="1"/>
</dbReference>
<dbReference type="NCBIfam" id="TIGR00409">
    <property type="entry name" value="proS_fam_II"/>
    <property type="match status" value="1"/>
</dbReference>
<dbReference type="PANTHER" id="PTHR42753">
    <property type="entry name" value="MITOCHONDRIAL RIBOSOME PROTEIN L39/PROLYL-TRNA LIGASE FAMILY MEMBER"/>
    <property type="match status" value="1"/>
</dbReference>
<dbReference type="PANTHER" id="PTHR42753:SF2">
    <property type="entry name" value="PROLINE--TRNA LIGASE"/>
    <property type="match status" value="1"/>
</dbReference>
<dbReference type="Pfam" id="PF03129">
    <property type="entry name" value="HGTP_anticodon"/>
    <property type="match status" value="1"/>
</dbReference>
<dbReference type="Pfam" id="PF00587">
    <property type="entry name" value="tRNA-synt_2b"/>
    <property type="match status" value="1"/>
</dbReference>
<dbReference type="Pfam" id="PF04073">
    <property type="entry name" value="tRNA_edit"/>
    <property type="match status" value="1"/>
</dbReference>
<dbReference type="PRINTS" id="PR01046">
    <property type="entry name" value="TRNASYNTHPRO"/>
</dbReference>
<dbReference type="SUPFAM" id="SSF52954">
    <property type="entry name" value="Class II aaRS ABD-related"/>
    <property type="match status" value="1"/>
</dbReference>
<dbReference type="SUPFAM" id="SSF55681">
    <property type="entry name" value="Class II aaRS and biotin synthetases"/>
    <property type="match status" value="1"/>
</dbReference>
<dbReference type="SUPFAM" id="SSF55826">
    <property type="entry name" value="YbaK/ProRS associated domain"/>
    <property type="match status" value="1"/>
</dbReference>
<dbReference type="PROSITE" id="PS50862">
    <property type="entry name" value="AA_TRNA_LIGASE_II"/>
    <property type="match status" value="1"/>
</dbReference>
<protein>
    <recommendedName>
        <fullName evidence="1">Proline--tRNA ligase</fullName>
        <ecNumber evidence="1">6.1.1.15</ecNumber>
    </recommendedName>
    <alternativeName>
        <fullName evidence="1">Prolyl-tRNA synthetase</fullName>
        <shortName evidence="1">ProRS</shortName>
    </alternativeName>
</protein>
<reference key="1">
    <citation type="submission" date="2007-11" db="EMBL/GenBank/DDBJ databases">
        <title>The genome sequence of the hyperthermophilic bacterium Thermotoga neapolitana.</title>
        <authorList>
            <person name="Lim S.K."/>
            <person name="Kim J.S."/>
            <person name="Cha S.H."/>
            <person name="Park B.C."/>
            <person name="Lee D.S."/>
            <person name="Tae H.S."/>
            <person name="Kim S.-J."/>
            <person name="Kim J.J."/>
            <person name="Park K.J."/>
            <person name="Lee S.Y."/>
        </authorList>
    </citation>
    <scope>NUCLEOTIDE SEQUENCE [LARGE SCALE GENOMIC DNA]</scope>
    <source>
        <strain>ATCC 49049 / DSM 4359 / NBRC 107923 / NS-E</strain>
    </source>
</reference>
<comment type="function">
    <text evidence="1">Catalyzes the attachment of proline to tRNA(Pro) in a two-step reaction: proline is first activated by ATP to form Pro-AMP and then transferred to the acceptor end of tRNA(Pro). As ProRS can inadvertently accommodate and process non-cognate amino acids such as alanine and cysteine, to avoid such errors it has two additional distinct editing activities against alanine. One activity is designated as 'pretransfer' editing and involves the tRNA(Pro)-independent hydrolysis of activated Ala-AMP. The other activity is designated 'posttransfer' editing and involves deacylation of mischarged Ala-tRNA(Pro). The misacylated Cys-tRNA(Pro) is not edited by ProRS.</text>
</comment>
<comment type="catalytic activity">
    <reaction evidence="1">
        <text>tRNA(Pro) + L-proline + ATP = L-prolyl-tRNA(Pro) + AMP + diphosphate</text>
        <dbReference type="Rhea" id="RHEA:14305"/>
        <dbReference type="Rhea" id="RHEA-COMP:9700"/>
        <dbReference type="Rhea" id="RHEA-COMP:9702"/>
        <dbReference type="ChEBI" id="CHEBI:30616"/>
        <dbReference type="ChEBI" id="CHEBI:33019"/>
        <dbReference type="ChEBI" id="CHEBI:60039"/>
        <dbReference type="ChEBI" id="CHEBI:78442"/>
        <dbReference type="ChEBI" id="CHEBI:78532"/>
        <dbReference type="ChEBI" id="CHEBI:456215"/>
        <dbReference type="EC" id="6.1.1.15"/>
    </reaction>
</comment>
<comment type="subunit">
    <text evidence="1">Homodimer.</text>
</comment>
<comment type="subcellular location">
    <subcellularLocation>
        <location evidence="1">Cytoplasm</location>
    </subcellularLocation>
</comment>
<comment type="domain">
    <text evidence="1">Consists of three domains: the N-terminal catalytic domain, the editing domain and the C-terminal anticodon-binding domain.</text>
</comment>
<comment type="similarity">
    <text evidence="1">Belongs to the class-II aminoacyl-tRNA synthetase family. ProS type 1 subfamily.</text>
</comment>
<accession>B9KBD7</accession>
<sequence length="577" mass="65835">MRMKQLYAPTLKETPSDVETVSHEYLLRGGFIRKVAAGIYTYLPLGRRVLLKIENIVREEMNRIGAQEILMPILQPAELWKRSGRWDDYGPEMMKLKDRHERDFTLGPTHEEIVTDLVKNELRSYRQLPLVVYQVANKYRDEIRPRFGLLRAREFIMKDAYSFHSSWESLDETYELFKEAYSRIMERLGVKYMVIEAETGAIGGNASHEFVVPAKIGETNVLYCEKCGYQASDEKAEYRGEYPVEEEEEKPLEKVPTPGVRTIEEVSQFLGVPPSKIVKSLLFVGRDGYVMALIRGDLELNEAKLKSHLKDQSLRLATPEEVLKDFGVPIGFIGPIGTNVKKVADHSIKGLKNFVVGGMEKDTHYVNANHPRDFKVDEWCDLRTVVEGDPCPVCGEPLRATKGIELGHIFKLGTKYSEAMEAYFMDENGEMKPFIMGCYGWGVSRTMAAVVEHFHDENGMIWPLSIAPYTVIVDILNMNDPDQKRVGEEIYRALLEKGEEVVLDDREVSPGFKFKDADLIGFPIRINVGRSLKDGVIELKKRYSKELVKVSIQNGLGSLFEALNRMKAEYDPREAIE</sequence>
<feature type="chain" id="PRO_1000185519" description="Proline--tRNA ligase">
    <location>
        <begin position="1"/>
        <end position="577"/>
    </location>
</feature>
<keyword id="KW-0030">Aminoacyl-tRNA synthetase</keyword>
<keyword id="KW-0067">ATP-binding</keyword>
<keyword id="KW-0963">Cytoplasm</keyword>
<keyword id="KW-0436">Ligase</keyword>
<keyword id="KW-0547">Nucleotide-binding</keyword>
<keyword id="KW-0648">Protein biosynthesis</keyword>